<sequence>MSKEPIIKLDNIDVTFHQKKREINAVKDVTIHINQGDIYGIVGYSGAGKSTLVRVINLLQEPSAGKITIDDQVIYDNKVTLTSTQLREQRREIGMIFQHFNLMSQLTAEQNVAFALKHSGLSKEAKAAKVAKLLELVGLSDRAQNYPSQLSGGQKQRVAIARALANDPKILISDESTSALDPKTTKQILALLQDLNKKLGLTIVLITHEMQIVKDIANRVAVMQNGKLIEEGSVLDIFSHPRESLTQDFIKIATGIDEAMLKIEQQEVVKNLPVGSKLVQLKYAGHSTDEPLLNQIYKEFEVTANILYGNIEILDGIPVGEMVVILSGDEEKLRQACQAITDSQVQLTLLKEGGKA</sequence>
<proteinExistence type="inferred from homology"/>
<name>METN_STRA5</name>
<protein>
    <recommendedName>
        <fullName evidence="1">Methionine import ATP-binding protein MetN</fullName>
        <ecNumber evidence="1">7.4.2.11</ecNumber>
    </recommendedName>
</protein>
<feature type="chain" id="PRO_0000270413" description="Methionine import ATP-binding protein MetN">
    <location>
        <begin position="1"/>
        <end position="356"/>
    </location>
</feature>
<feature type="domain" description="ABC transporter" evidence="1">
    <location>
        <begin position="7"/>
        <end position="250"/>
    </location>
</feature>
<feature type="binding site" evidence="1">
    <location>
        <begin position="43"/>
        <end position="50"/>
    </location>
    <ligand>
        <name>ATP</name>
        <dbReference type="ChEBI" id="CHEBI:30616"/>
    </ligand>
</feature>
<dbReference type="EC" id="7.4.2.11" evidence="1"/>
<dbReference type="EMBL" id="AE009948">
    <property type="protein sequence ID" value="AAN00503.1"/>
    <property type="molecule type" value="Genomic_DNA"/>
</dbReference>
<dbReference type="RefSeq" id="NP_688630.1">
    <property type="nucleotide sequence ID" value="NC_004116.1"/>
</dbReference>
<dbReference type="RefSeq" id="WP_000032379.1">
    <property type="nucleotide sequence ID" value="NC_004116.1"/>
</dbReference>
<dbReference type="SMR" id="Q8DY54"/>
<dbReference type="STRING" id="208435.SAG1639"/>
<dbReference type="KEGG" id="sag:SAG1639"/>
<dbReference type="PATRIC" id="fig|208435.3.peg.1650"/>
<dbReference type="HOGENOM" id="CLU_000604_1_3_9"/>
<dbReference type="OrthoDB" id="9802264at2"/>
<dbReference type="Proteomes" id="UP000000821">
    <property type="component" value="Chromosome"/>
</dbReference>
<dbReference type="GO" id="GO:0005886">
    <property type="term" value="C:plasma membrane"/>
    <property type="evidence" value="ECO:0007669"/>
    <property type="project" value="UniProtKB-SubCell"/>
</dbReference>
<dbReference type="GO" id="GO:0033232">
    <property type="term" value="F:ABC-type D-methionine transporter activity"/>
    <property type="evidence" value="ECO:0007669"/>
    <property type="project" value="UniProtKB-EC"/>
</dbReference>
<dbReference type="GO" id="GO:0005524">
    <property type="term" value="F:ATP binding"/>
    <property type="evidence" value="ECO:0007669"/>
    <property type="project" value="UniProtKB-KW"/>
</dbReference>
<dbReference type="GO" id="GO:0016887">
    <property type="term" value="F:ATP hydrolysis activity"/>
    <property type="evidence" value="ECO:0007669"/>
    <property type="project" value="InterPro"/>
</dbReference>
<dbReference type="CDD" id="cd03258">
    <property type="entry name" value="ABC_MetN_methionine_transporter"/>
    <property type="match status" value="1"/>
</dbReference>
<dbReference type="FunFam" id="3.40.50.300:FF:000056">
    <property type="entry name" value="Cell division ATP-binding protein FtsE"/>
    <property type="match status" value="1"/>
</dbReference>
<dbReference type="Gene3D" id="3.30.70.260">
    <property type="match status" value="1"/>
</dbReference>
<dbReference type="Gene3D" id="3.40.50.300">
    <property type="entry name" value="P-loop containing nucleotide triphosphate hydrolases"/>
    <property type="match status" value="1"/>
</dbReference>
<dbReference type="InterPro" id="IPR003593">
    <property type="entry name" value="AAA+_ATPase"/>
</dbReference>
<dbReference type="InterPro" id="IPR003439">
    <property type="entry name" value="ABC_transporter-like_ATP-bd"/>
</dbReference>
<dbReference type="InterPro" id="IPR017871">
    <property type="entry name" value="ABC_transporter-like_CS"/>
</dbReference>
<dbReference type="InterPro" id="IPR045865">
    <property type="entry name" value="ACT-like_dom_sf"/>
</dbReference>
<dbReference type="InterPro" id="IPR041701">
    <property type="entry name" value="MetN_ABC"/>
</dbReference>
<dbReference type="InterPro" id="IPR050086">
    <property type="entry name" value="MetN_ABC_transporter-like"/>
</dbReference>
<dbReference type="InterPro" id="IPR018449">
    <property type="entry name" value="NIL_domain"/>
</dbReference>
<dbReference type="InterPro" id="IPR027417">
    <property type="entry name" value="P-loop_NTPase"/>
</dbReference>
<dbReference type="PANTHER" id="PTHR43166">
    <property type="entry name" value="AMINO ACID IMPORT ATP-BINDING PROTEIN"/>
    <property type="match status" value="1"/>
</dbReference>
<dbReference type="PANTHER" id="PTHR43166:SF30">
    <property type="entry name" value="METHIONINE IMPORT ATP-BINDING PROTEIN METN"/>
    <property type="match status" value="1"/>
</dbReference>
<dbReference type="Pfam" id="PF00005">
    <property type="entry name" value="ABC_tran"/>
    <property type="match status" value="1"/>
</dbReference>
<dbReference type="Pfam" id="PF09383">
    <property type="entry name" value="NIL"/>
    <property type="match status" value="1"/>
</dbReference>
<dbReference type="SMART" id="SM00382">
    <property type="entry name" value="AAA"/>
    <property type="match status" value="1"/>
</dbReference>
<dbReference type="SMART" id="SM00930">
    <property type="entry name" value="NIL"/>
    <property type="match status" value="1"/>
</dbReference>
<dbReference type="SUPFAM" id="SSF55021">
    <property type="entry name" value="ACT-like"/>
    <property type="match status" value="1"/>
</dbReference>
<dbReference type="SUPFAM" id="SSF52540">
    <property type="entry name" value="P-loop containing nucleoside triphosphate hydrolases"/>
    <property type="match status" value="1"/>
</dbReference>
<dbReference type="PROSITE" id="PS00211">
    <property type="entry name" value="ABC_TRANSPORTER_1"/>
    <property type="match status" value="1"/>
</dbReference>
<dbReference type="PROSITE" id="PS50893">
    <property type="entry name" value="ABC_TRANSPORTER_2"/>
    <property type="match status" value="1"/>
</dbReference>
<dbReference type="PROSITE" id="PS51264">
    <property type="entry name" value="METN"/>
    <property type="match status" value="1"/>
</dbReference>
<gene>
    <name evidence="1" type="primary">metN</name>
    <name type="ordered locus">SAG1639</name>
</gene>
<reference key="1">
    <citation type="journal article" date="2002" name="Proc. Natl. Acad. Sci. U.S.A.">
        <title>Complete genome sequence and comparative genomic analysis of an emerging human pathogen, serotype V Streptococcus agalactiae.</title>
        <authorList>
            <person name="Tettelin H."/>
            <person name="Masignani V."/>
            <person name="Cieslewicz M.J."/>
            <person name="Eisen J.A."/>
            <person name="Peterson S.N."/>
            <person name="Wessels M.R."/>
            <person name="Paulsen I.T."/>
            <person name="Nelson K.E."/>
            <person name="Margarit I."/>
            <person name="Read T.D."/>
            <person name="Madoff L.C."/>
            <person name="Wolf A.M."/>
            <person name="Beanan M.J."/>
            <person name="Brinkac L.M."/>
            <person name="Daugherty S.C."/>
            <person name="DeBoy R.T."/>
            <person name="Durkin A.S."/>
            <person name="Kolonay J.F."/>
            <person name="Madupu R."/>
            <person name="Lewis M.R."/>
            <person name="Radune D."/>
            <person name="Fedorova N.B."/>
            <person name="Scanlan D."/>
            <person name="Khouri H.M."/>
            <person name="Mulligan S."/>
            <person name="Carty H.A."/>
            <person name="Cline R.T."/>
            <person name="Van Aken S.E."/>
            <person name="Gill J."/>
            <person name="Scarselli M."/>
            <person name="Mora M."/>
            <person name="Iacobini E.T."/>
            <person name="Brettoni C."/>
            <person name="Galli G."/>
            <person name="Mariani M."/>
            <person name="Vegni F."/>
            <person name="Maione D."/>
            <person name="Rinaudo D."/>
            <person name="Rappuoli R."/>
            <person name="Telford J.L."/>
            <person name="Kasper D.L."/>
            <person name="Grandi G."/>
            <person name="Fraser C.M."/>
        </authorList>
    </citation>
    <scope>NUCLEOTIDE SEQUENCE [LARGE SCALE GENOMIC DNA]</scope>
    <source>
        <strain>ATCC BAA-611 / 2603 V/R</strain>
    </source>
</reference>
<organism>
    <name type="scientific">Streptococcus agalactiae serotype V (strain ATCC BAA-611 / 2603 V/R)</name>
    <dbReference type="NCBI Taxonomy" id="208435"/>
    <lineage>
        <taxon>Bacteria</taxon>
        <taxon>Bacillati</taxon>
        <taxon>Bacillota</taxon>
        <taxon>Bacilli</taxon>
        <taxon>Lactobacillales</taxon>
        <taxon>Streptococcaceae</taxon>
        <taxon>Streptococcus</taxon>
    </lineage>
</organism>
<evidence type="ECO:0000255" key="1">
    <source>
        <dbReference type="HAMAP-Rule" id="MF_01719"/>
    </source>
</evidence>
<accession>Q8DY54</accession>
<keyword id="KW-0029">Amino-acid transport</keyword>
<keyword id="KW-0067">ATP-binding</keyword>
<keyword id="KW-1003">Cell membrane</keyword>
<keyword id="KW-0472">Membrane</keyword>
<keyword id="KW-0547">Nucleotide-binding</keyword>
<keyword id="KW-1185">Reference proteome</keyword>
<keyword id="KW-1278">Translocase</keyword>
<keyword id="KW-0813">Transport</keyword>
<comment type="function">
    <text evidence="1">Part of the ABC transporter complex MetNIQ involved in methionine import. Responsible for energy coupling to the transport system.</text>
</comment>
<comment type="catalytic activity">
    <reaction evidence="1">
        <text>L-methionine(out) + ATP + H2O = L-methionine(in) + ADP + phosphate + H(+)</text>
        <dbReference type="Rhea" id="RHEA:29779"/>
        <dbReference type="ChEBI" id="CHEBI:15377"/>
        <dbReference type="ChEBI" id="CHEBI:15378"/>
        <dbReference type="ChEBI" id="CHEBI:30616"/>
        <dbReference type="ChEBI" id="CHEBI:43474"/>
        <dbReference type="ChEBI" id="CHEBI:57844"/>
        <dbReference type="ChEBI" id="CHEBI:456216"/>
        <dbReference type="EC" id="7.4.2.11"/>
    </reaction>
</comment>
<comment type="catalytic activity">
    <reaction evidence="1">
        <text>D-methionine(out) + ATP + H2O = D-methionine(in) + ADP + phosphate + H(+)</text>
        <dbReference type="Rhea" id="RHEA:29767"/>
        <dbReference type="ChEBI" id="CHEBI:15377"/>
        <dbReference type="ChEBI" id="CHEBI:15378"/>
        <dbReference type="ChEBI" id="CHEBI:30616"/>
        <dbReference type="ChEBI" id="CHEBI:43474"/>
        <dbReference type="ChEBI" id="CHEBI:57932"/>
        <dbReference type="ChEBI" id="CHEBI:456216"/>
        <dbReference type="EC" id="7.4.2.11"/>
    </reaction>
</comment>
<comment type="subunit">
    <text evidence="1">The complex is composed of two ATP-binding proteins (MetN), two transmembrane proteins (MetI) and a solute-binding protein (MetQ).</text>
</comment>
<comment type="subcellular location">
    <subcellularLocation>
        <location evidence="1">Cell membrane</location>
        <topology evidence="1">Peripheral membrane protein</topology>
    </subcellularLocation>
</comment>
<comment type="similarity">
    <text evidence="1">Belongs to the ABC transporter superfamily. Methionine importer (TC 3.A.1.24) family.</text>
</comment>